<keyword id="KW-0325">Glycoprotein</keyword>
<keyword id="KW-0945">Host-virus interaction</keyword>
<keyword id="KW-0393">Immunoglobulin domain</keyword>
<keyword id="KW-1185">Reference proteome</keyword>
<keyword id="KW-0677">Repeat</keyword>
<keyword id="KW-0964">Secreted</keyword>
<keyword id="KW-0732">Signal</keyword>
<keyword id="KW-0899">Viral immunoevasion</keyword>
<reference key="1">
    <citation type="journal article" date="2022" name="J. Infect. Dis.">
        <title>Exportation of Monkeypox virus from the African continent.</title>
        <authorList>
            <person name="Mauldin M.R."/>
            <person name="McCollum A.M."/>
            <person name="Nakazawa Y.J."/>
            <person name="Mandra A."/>
            <person name="Whitehouse E.R."/>
            <person name="Davidson W."/>
            <person name="Zhao H."/>
            <person name="Gao J."/>
            <person name="Li Y."/>
            <person name="Doty J."/>
            <person name="Yinka-Ogunleye A."/>
            <person name="Akinpelu A."/>
            <person name="Aruna O."/>
            <person name="Naidoo D."/>
            <person name="Lewandowski K."/>
            <person name="Afrough B."/>
            <person name="Graham V."/>
            <person name="Aarons E."/>
            <person name="Hewson R."/>
            <person name="Vipond R."/>
            <person name="Dunning J."/>
            <person name="Chand M."/>
            <person name="Brown C."/>
            <person name="Cohen-Gihon I."/>
            <person name="Erez N."/>
            <person name="Shifman O."/>
            <person name="Israeli O."/>
            <person name="Sharon M."/>
            <person name="Schwartz E."/>
            <person name="Beth-Din A."/>
            <person name="Zvi A."/>
            <person name="Mak T.M."/>
            <person name="Ng Y.K."/>
            <person name="Cui L."/>
            <person name="Lin R.T.P."/>
            <person name="Olson V.A."/>
            <person name="Brooks T."/>
            <person name="Paran N."/>
            <person name="Ihekweazu C."/>
            <person name="Reynolds M.G."/>
        </authorList>
    </citation>
    <scope>NUCLEOTIDE SEQUENCE [LARGE SCALE GENOMIC DNA]</scope>
    <source>
        <strain>MPXV-M5312_HM12_Rivers</strain>
    </source>
</reference>
<organism>
    <name type="scientific">Monkeypox virus</name>
    <dbReference type="NCBI Taxonomy" id="10244"/>
    <lineage>
        <taxon>Viruses</taxon>
        <taxon>Varidnaviria</taxon>
        <taxon>Bamfordvirae</taxon>
        <taxon>Nucleocytoviricota</taxon>
        <taxon>Pokkesviricetes</taxon>
        <taxon>Chitovirales</taxon>
        <taxon>Poxviridae</taxon>
        <taxon>Chordopoxvirinae</taxon>
        <taxon>Orthopoxvirus</taxon>
    </lineage>
</organism>
<sequence>MSILPVIFLPIFFYSPFVQTFNVPECIDKGQYFASFMELENEPVILPCPQINTLSSGYNILDILWEKRGADNDRIIQIDNGSNMLILNPTQSDSGIYIYITTNETYCDMMSLNLTIVSVSESNIDLISYPQIVNERSTGKMVCPNINAFISSNVNTELYGADIDALEIRDLNNGHLELLP</sequence>
<name>IL1BP_MONPV</name>
<protein>
    <recommendedName>
        <fullName>Interleukin-1-binding protein</fullName>
    </recommendedName>
</protein>
<dbReference type="EMBL" id="MT903340">
    <property type="protein sequence ID" value="QNP13044.1"/>
    <property type="molecule type" value="Genomic_DNA"/>
</dbReference>
<dbReference type="SMR" id="A0A7H0DNG1"/>
<dbReference type="Proteomes" id="UP000516359">
    <property type="component" value="Genome"/>
</dbReference>
<dbReference type="GO" id="GO:0005576">
    <property type="term" value="C:extracellular region"/>
    <property type="evidence" value="ECO:0007669"/>
    <property type="project" value="UniProtKB-SubCell"/>
</dbReference>
<dbReference type="GO" id="GO:0019966">
    <property type="term" value="F:interleukin-1 binding"/>
    <property type="evidence" value="ECO:0007669"/>
    <property type="project" value="InterPro"/>
</dbReference>
<dbReference type="GO" id="GO:0004908">
    <property type="term" value="F:interleukin-1 receptor activity"/>
    <property type="evidence" value="ECO:0007669"/>
    <property type="project" value="InterPro"/>
</dbReference>
<dbReference type="GO" id="GO:0044003">
    <property type="term" value="P:symbiont-mediated perturbation of host process"/>
    <property type="evidence" value="ECO:0007669"/>
    <property type="project" value="InterPro"/>
</dbReference>
<dbReference type="Gene3D" id="2.60.40.10">
    <property type="entry name" value="Immunoglobulins"/>
    <property type="match status" value="1"/>
</dbReference>
<dbReference type="InterPro" id="IPR036179">
    <property type="entry name" value="Ig-like_dom_sf"/>
</dbReference>
<dbReference type="InterPro" id="IPR013783">
    <property type="entry name" value="Ig-like_fold"/>
</dbReference>
<dbReference type="InterPro" id="IPR004078">
    <property type="entry name" value="IL-1-bd"/>
</dbReference>
<dbReference type="InterPro" id="IPR004074">
    <property type="entry name" value="IL-1_rcpt_I/II-typ"/>
</dbReference>
<dbReference type="PRINTS" id="PR01540">
    <property type="entry name" value="INTRLEUKN1BP"/>
</dbReference>
<dbReference type="PRINTS" id="PR01536">
    <property type="entry name" value="INTRLKN1R12F"/>
</dbReference>
<dbReference type="SUPFAM" id="SSF48726">
    <property type="entry name" value="Immunoglobulin"/>
    <property type="match status" value="1"/>
</dbReference>
<proteinExistence type="inferred from homology"/>
<accession>A0A7H0DNG1</accession>
<feature type="signal peptide" evidence="2">
    <location>
        <begin position="1"/>
        <end position="20"/>
    </location>
</feature>
<feature type="chain" id="PRO_0000457617" description="Interleukin-1-binding protein" evidence="2">
    <location>
        <begin position="21"/>
        <end position="180"/>
    </location>
</feature>
<feature type="glycosylation site" description="N-linked (GlcNAc...) asparagine; by host" evidence="3">
    <location>
        <position position="80"/>
    </location>
</feature>
<feature type="glycosylation site" description="N-linked (GlcNAc...) asparagine; by host" evidence="3">
    <location>
        <position position="103"/>
    </location>
</feature>
<feature type="glycosylation site" description="N-linked (GlcNAc...) asparagine; by host" evidence="3">
    <location>
        <position position="113"/>
    </location>
</feature>
<gene>
    <name type="primary">OPG201</name>
    <name type="ORF">MPXVgp175</name>
</gene>
<organismHost>
    <name type="scientific">Cynomys gunnisoni</name>
    <name type="common">Gunnison's prairie dog</name>
    <name type="synonym">Spermophilus gunnisoni</name>
    <dbReference type="NCBI Taxonomy" id="45479"/>
</organismHost>
<organismHost>
    <name type="scientific">Cynomys leucurus</name>
    <name type="common">White-tailed prairie dog</name>
    <dbReference type="NCBI Taxonomy" id="99825"/>
</organismHost>
<organismHost>
    <name type="scientific">Cynomys ludovicianus</name>
    <name type="common">Black-tailed prairie dog</name>
    <dbReference type="NCBI Taxonomy" id="45480"/>
</organismHost>
<organismHost>
    <name type="scientific">Cynomys mexicanus</name>
    <name type="common">Mexican prairie dog</name>
    <dbReference type="NCBI Taxonomy" id="99826"/>
</organismHost>
<organismHost>
    <name type="scientific">Cynomys parvidens</name>
    <name type="common">Utah prairie dog</name>
    <dbReference type="NCBI Taxonomy" id="99827"/>
</organismHost>
<organismHost>
    <name type="scientific">Gliridae</name>
    <name type="common">dormice</name>
    <dbReference type="NCBI Taxonomy" id="30650"/>
</organismHost>
<organismHost>
    <name type="scientific">Heliosciurus ruwenzorii</name>
    <name type="common">Ruwenzori sun squirrel</name>
    <dbReference type="NCBI Taxonomy" id="226685"/>
</organismHost>
<organismHost>
    <name type="scientific">Homo sapiens</name>
    <name type="common">Human</name>
    <dbReference type="NCBI Taxonomy" id="9606"/>
</organismHost>
<organismHost>
    <name type="scientific">Mus musculus</name>
    <name type="common">Mouse</name>
    <dbReference type="NCBI Taxonomy" id="10090"/>
</organismHost>
<comment type="function">
    <text evidence="1">May reduce the host inflammatory response by interacting with inteleukin-1 beta (Il1b) and thus decreasing the association between IL1B and its cellular receptor.</text>
</comment>
<comment type="subunit">
    <text evidence="1">Interacts with mouse Il1b.</text>
</comment>
<comment type="subcellular location">
    <subcellularLocation>
        <location evidence="1">Secreted</location>
    </subcellularLocation>
</comment>
<comment type="similarity">
    <text evidence="4">Belongs to the interleukin-1 receptor family.</text>
</comment>
<evidence type="ECO:0000250" key="1">
    <source>
        <dbReference type="UniProtKB" id="P25212"/>
    </source>
</evidence>
<evidence type="ECO:0000255" key="2"/>
<evidence type="ECO:0000255" key="3">
    <source>
        <dbReference type="PROSITE-ProRule" id="PRU00498"/>
    </source>
</evidence>
<evidence type="ECO:0000305" key="4"/>